<name>CYSI_ECOSM</name>
<organism>
    <name type="scientific">Escherichia coli (strain SMS-3-5 / SECEC)</name>
    <dbReference type="NCBI Taxonomy" id="439855"/>
    <lineage>
        <taxon>Bacteria</taxon>
        <taxon>Pseudomonadati</taxon>
        <taxon>Pseudomonadota</taxon>
        <taxon>Gammaproteobacteria</taxon>
        <taxon>Enterobacterales</taxon>
        <taxon>Enterobacteriaceae</taxon>
        <taxon>Escherichia</taxon>
    </lineage>
</organism>
<keyword id="KW-0004">4Fe-4S</keyword>
<keyword id="KW-0028">Amino-acid biosynthesis</keyword>
<keyword id="KW-0198">Cysteine biosynthesis</keyword>
<keyword id="KW-0349">Heme</keyword>
<keyword id="KW-0408">Iron</keyword>
<keyword id="KW-0411">Iron-sulfur</keyword>
<keyword id="KW-0479">Metal-binding</keyword>
<keyword id="KW-0521">NADP</keyword>
<keyword id="KW-0560">Oxidoreductase</keyword>
<comment type="function">
    <text evidence="1">Component of the sulfite reductase complex that catalyzes the 6-electron reduction of sulfite to sulfide. This is one of several activities required for the biosynthesis of L-cysteine from sulfate.</text>
</comment>
<comment type="catalytic activity">
    <reaction evidence="1">
        <text>hydrogen sulfide + 3 NADP(+) + 3 H2O = sulfite + 3 NADPH + 4 H(+)</text>
        <dbReference type="Rhea" id="RHEA:13801"/>
        <dbReference type="ChEBI" id="CHEBI:15377"/>
        <dbReference type="ChEBI" id="CHEBI:15378"/>
        <dbReference type="ChEBI" id="CHEBI:17359"/>
        <dbReference type="ChEBI" id="CHEBI:29919"/>
        <dbReference type="ChEBI" id="CHEBI:57783"/>
        <dbReference type="ChEBI" id="CHEBI:58349"/>
        <dbReference type="EC" id="1.8.1.2"/>
    </reaction>
</comment>
<comment type="cofactor">
    <cofactor evidence="1">
        <name>siroheme</name>
        <dbReference type="ChEBI" id="CHEBI:60052"/>
    </cofactor>
    <text evidence="1">Binds 1 siroheme per subunit.</text>
</comment>
<comment type="cofactor">
    <cofactor evidence="1">
        <name>[4Fe-4S] cluster</name>
        <dbReference type="ChEBI" id="CHEBI:49883"/>
    </cofactor>
    <text evidence="1">Binds 1 [4Fe-4S] cluster per subunit.</text>
</comment>
<comment type="pathway">
    <text evidence="1">Sulfur metabolism; hydrogen sulfide biosynthesis; hydrogen sulfide from sulfite (NADPH route): step 1/1.</text>
</comment>
<comment type="subunit">
    <text evidence="1">Alpha(8)-beta(8). The alpha component is a flavoprotein, the beta component is a hemoprotein.</text>
</comment>
<comment type="similarity">
    <text evidence="1">Belongs to the nitrite and sulfite reductase 4Fe-4S domain family.</text>
</comment>
<dbReference type="EC" id="1.8.1.2" evidence="1"/>
<dbReference type="EMBL" id="CP000970">
    <property type="protein sequence ID" value="ACB17214.1"/>
    <property type="molecule type" value="Genomic_DNA"/>
</dbReference>
<dbReference type="RefSeq" id="WP_001290704.1">
    <property type="nucleotide sequence ID" value="NC_010498.1"/>
</dbReference>
<dbReference type="SMR" id="B1LQ86"/>
<dbReference type="KEGG" id="ecm:EcSMS35_2891"/>
<dbReference type="HOGENOM" id="CLU_001975_3_2_6"/>
<dbReference type="UniPathway" id="UPA00140">
    <property type="reaction ID" value="UER00207"/>
</dbReference>
<dbReference type="Proteomes" id="UP000007011">
    <property type="component" value="Chromosome"/>
</dbReference>
<dbReference type="GO" id="GO:0009337">
    <property type="term" value="C:sulfite reductase complex (NADPH)"/>
    <property type="evidence" value="ECO:0007669"/>
    <property type="project" value="InterPro"/>
</dbReference>
<dbReference type="GO" id="GO:0051539">
    <property type="term" value="F:4 iron, 4 sulfur cluster binding"/>
    <property type="evidence" value="ECO:0007669"/>
    <property type="project" value="UniProtKB-KW"/>
</dbReference>
<dbReference type="GO" id="GO:0020037">
    <property type="term" value="F:heme binding"/>
    <property type="evidence" value="ECO:0007669"/>
    <property type="project" value="InterPro"/>
</dbReference>
<dbReference type="GO" id="GO:0046872">
    <property type="term" value="F:metal ion binding"/>
    <property type="evidence" value="ECO:0007669"/>
    <property type="project" value="UniProtKB-KW"/>
</dbReference>
<dbReference type="GO" id="GO:0050661">
    <property type="term" value="F:NADP binding"/>
    <property type="evidence" value="ECO:0007669"/>
    <property type="project" value="InterPro"/>
</dbReference>
<dbReference type="GO" id="GO:0050311">
    <property type="term" value="F:sulfite reductase (ferredoxin) activity"/>
    <property type="evidence" value="ECO:0007669"/>
    <property type="project" value="TreeGrafter"/>
</dbReference>
<dbReference type="GO" id="GO:0004783">
    <property type="term" value="F:sulfite reductase (NADPH) activity"/>
    <property type="evidence" value="ECO:0007669"/>
    <property type="project" value="UniProtKB-UniRule"/>
</dbReference>
<dbReference type="GO" id="GO:0019344">
    <property type="term" value="P:cysteine biosynthetic process"/>
    <property type="evidence" value="ECO:0007669"/>
    <property type="project" value="UniProtKB-KW"/>
</dbReference>
<dbReference type="GO" id="GO:0070814">
    <property type="term" value="P:hydrogen sulfide biosynthetic process"/>
    <property type="evidence" value="ECO:0007669"/>
    <property type="project" value="UniProtKB-UniRule"/>
</dbReference>
<dbReference type="GO" id="GO:0000103">
    <property type="term" value="P:sulfate assimilation"/>
    <property type="evidence" value="ECO:0007669"/>
    <property type="project" value="UniProtKB-UniRule"/>
</dbReference>
<dbReference type="FunFam" id="3.30.413.10:FF:000003">
    <property type="entry name" value="Sulfite reductase [NADPH] hemoprotein beta-component"/>
    <property type="match status" value="1"/>
</dbReference>
<dbReference type="FunFam" id="3.30.413.10:FF:000004">
    <property type="entry name" value="Sulfite reductase [NADPH] hemoprotein beta-component"/>
    <property type="match status" value="1"/>
</dbReference>
<dbReference type="Gene3D" id="3.30.413.10">
    <property type="entry name" value="Sulfite Reductase Hemoprotein, domain 1"/>
    <property type="match status" value="2"/>
</dbReference>
<dbReference type="HAMAP" id="MF_01540">
    <property type="entry name" value="CysI"/>
    <property type="match status" value="1"/>
</dbReference>
<dbReference type="InterPro" id="IPR011786">
    <property type="entry name" value="CysI"/>
</dbReference>
<dbReference type="InterPro" id="IPR005117">
    <property type="entry name" value="NiRdtase/SiRdtase_haem-b_fer"/>
</dbReference>
<dbReference type="InterPro" id="IPR036136">
    <property type="entry name" value="Nit/Sulf_reduc_fer-like_dom_sf"/>
</dbReference>
<dbReference type="InterPro" id="IPR006067">
    <property type="entry name" value="NO2/SO3_Rdtase_4Fe4S_dom"/>
</dbReference>
<dbReference type="InterPro" id="IPR045169">
    <property type="entry name" value="NO2/SO3_Rdtase_4Fe4S_prot"/>
</dbReference>
<dbReference type="InterPro" id="IPR045854">
    <property type="entry name" value="NO2/SO3_Rdtase_4Fe4S_sf"/>
</dbReference>
<dbReference type="InterPro" id="IPR006066">
    <property type="entry name" value="NO2/SO3_Rdtase_FeS/sirohaem_BS"/>
</dbReference>
<dbReference type="NCBIfam" id="TIGR02041">
    <property type="entry name" value="CysI"/>
    <property type="match status" value="1"/>
</dbReference>
<dbReference type="NCBIfam" id="NF010029">
    <property type="entry name" value="PRK13504.1"/>
    <property type="match status" value="1"/>
</dbReference>
<dbReference type="PANTHER" id="PTHR11493:SF47">
    <property type="entry name" value="SULFITE REDUCTASE [NADPH] SUBUNIT BETA"/>
    <property type="match status" value="1"/>
</dbReference>
<dbReference type="PANTHER" id="PTHR11493">
    <property type="entry name" value="SULFITE REDUCTASE [NADPH] SUBUNIT BETA-RELATED"/>
    <property type="match status" value="1"/>
</dbReference>
<dbReference type="Pfam" id="PF01077">
    <property type="entry name" value="NIR_SIR"/>
    <property type="match status" value="1"/>
</dbReference>
<dbReference type="Pfam" id="PF03460">
    <property type="entry name" value="NIR_SIR_ferr"/>
    <property type="match status" value="2"/>
</dbReference>
<dbReference type="PRINTS" id="PR00397">
    <property type="entry name" value="SIROHAEM"/>
</dbReference>
<dbReference type="SUPFAM" id="SSF56014">
    <property type="entry name" value="Nitrite and sulphite reductase 4Fe-4S domain-like"/>
    <property type="match status" value="2"/>
</dbReference>
<dbReference type="SUPFAM" id="SSF55124">
    <property type="entry name" value="Nitrite/Sulfite reductase N-terminal domain-like"/>
    <property type="match status" value="2"/>
</dbReference>
<dbReference type="PROSITE" id="PS00365">
    <property type="entry name" value="NIR_SIR"/>
    <property type="match status" value="1"/>
</dbReference>
<evidence type="ECO:0000255" key="1">
    <source>
        <dbReference type="HAMAP-Rule" id="MF_01540"/>
    </source>
</evidence>
<protein>
    <recommendedName>
        <fullName evidence="1">Sulfite reductase [NADPH] hemoprotein beta-component</fullName>
        <shortName evidence="1">SiR-HP</shortName>
        <shortName evidence="1">SiRHP</shortName>
        <ecNumber evidence="1">1.8.1.2</ecNumber>
    </recommendedName>
</protein>
<accession>B1LQ86</accession>
<proteinExistence type="inferred from homology"/>
<sequence length="570" mass="63974">MSEKHPGPLVVEGKLTDAERMKLESNYLRGTIAEDLNDGLTGGFKGDNFLLIRFHGMYQQDDRDIRAERAEQKLEPRHAMLLRCRLPGGVITTKQWQAIDKFAGENTIYGSIRLTNRQTFQFHGILKKNVKPVHQMLHSVGLDALATANDMNRNVLCTSNPYESQLHAEAYEWAKKISEHLLPRTRAYAEIWLDQEKVATTDEEPILGQTYLPRKFKTTVVIPPQNDIDLHANDMNFVAIAENGKLVGFNLLVGGGLSIEHGNKKTYARTASEFGYLPLEHTLAVAEAVVTTQRDWGNRTDRKNAKTKYTLERVGVETFKAEVERRAGIKFEPIRPYEFTGRGDRIGWVKGIDDNWHLTLFIENGRILDYPGRPLKTGLLEIAKIHKGDFRITANQNLIIAGVPESEKAKIEKIAKESGLMNAVTPQRENSMACVSFPTCPLAMAEAERFLPSFIDKIDNLMAKHGVSDEHIVMRVTGCPNGCGRAMLAEVGLVGKAPGRYNLHLGGNRIGTRIPRMYKENITEPEILASLDELIGRWAKEREAGEGFGDFTVRAGIIRPVLDPARDLWD</sequence>
<gene>
    <name evidence="1" type="primary">cysI</name>
    <name type="ordered locus">EcSMS35_2891</name>
</gene>
<reference key="1">
    <citation type="journal article" date="2008" name="J. Bacteriol.">
        <title>Insights into the environmental resistance gene pool from the genome sequence of the multidrug-resistant environmental isolate Escherichia coli SMS-3-5.</title>
        <authorList>
            <person name="Fricke W.F."/>
            <person name="Wright M.S."/>
            <person name="Lindell A.H."/>
            <person name="Harkins D.M."/>
            <person name="Baker-Austin C."/>
            <person name="Ravel J."/>
            <person name="Stepanauskas R."/>
        </authorList>
    </citation>
    <scope>NUCLEOTIDE SEQUENCE [LARGE SCALE GENOMIC DNA]</scope>
    <source>
        <strain>SMS-3-5 / SECEC</strain>
    </source>
</reference>
<feature type="chain" id="PRO_1000146649" description="Sulfite reductase [NADPH] hemoprotein beta-component">
    <location>
        <begin position="1"/>
        <end position="570"/>
    </location>
</feature>
<feature type="binding site" evidence="1">
    <location>
        <position position="434"/>
    </location>
    <ligand>
        <name>[4Fe-4S] cluster</name>
        <dbReference type="ChEBI" id="CHEBI:49883"/>
    </ligand>
</feature>
<feature type="binding site" evidence="1">
    <location>
        <position position="440"/>
    </location>
    <ligand>
        <name>[4Fe-4S] cluster</name>
        <dbReference type="ChEBI" id="CHEBI:49883"/>
    </ligand>
</feature>
<feature type="binding site" evidence="1">
    <location>
        <position position="479"/>
    </location>
    <ligand>
        <name>[4Fe-4S] cluster</name>
        <dbReference type="ChEBI" id="CHEBI:49883"/>
    </ligand>
</feature>
<feature type="binding site" evidence="1">
    <location>
        <position position="483"/>
    </location>
    <ligand>
        <name>[4Fe-4S] cluster</name>
        <dbReference type="ChEBI" id="CHEBI:49883"/>
    </ligand>
</feature>
<feature type="binding site" description="axial binding residue" evidence="1">
    <location>
        <position position="483"/>
    </location>
    <ligand>
        <name>siroheme</name>
        <dbReference type="ChEBI" id="CHEBI:60052"/>
    </ligand>
    <ligandPart>
        <name>Fe</name>
        <dbReference type="ChEBI" id="CHEBI:18248"/>
    </ligandPart>
</feature>